<sequence length="84" mass="9406">MMKREQRRSVGLRLRAGIRCHNRFYAVLKRDISSTSASGVYTDRLECLLGGSVSAESLKKAKGVYLACEVNLGRRRPDCVCTIQ</sequence>
<name>UL24_FHV1</name>
<dbReference type="EMBL" id="M26660">
    <property type="protein sequence ID" value="AAA46171.1"/>
    <property type="status" value="ALT_INIT"/>
    <property type="molecule type" value="Genomic_DNA"/>
</dbReference>
<dbReference type="InterPro" id="IPR002580">
    <property type="entry name" value="Herpes_UL24"/>
</dbReference>
<dbReference type="Pfam" id="PF01646">
    <property type="entry name" value="Herpes_UL24"/>
    <property type="match status" value="1"/>
</dbReference>
<organismHost>
    <name type="scientific">Felidae</name>
    <name type="common">cat family</name>
    <dbReference type="NCBI Taxonomy" id="9681"/>
</organismHost>
<reference key="1">
    <citation type="journal article" date="1989" name="J. Virol.">
        <title>Identification of the thymidine kinase gene of feline herpesvirus: use of degenerate oligonucleotides in the polymerase chain reaction to isolate herpesvirus gene homologs.</title>
        <authorList>
            <person name="Nunberg J.H."/>
            <person name="Wright D.K."/>
            <person name="Cole G.E."/>
            <person name="Petrovskis E.A."/>
            <person name="Post L.E."/>
            <person name="Compton T."/>
            <person name="Gilbert J.H."/>
        </authorList>
    </citation>
    <scope>NUCLEOTIDE SEQUENCE [GENOMIC DNA]</scope>
</reference>
<feature type="chain" id="PRO_0000115983" description="Protein UL24 homolog">
    <location>
        <begin position="1"/>
        <end position="84" status="greater than"/>
    </location>
</feature>
<feature type="non-terminal residue">
    <location>
        <position position="84"/>
    </location>
</feature>
<accession>P13161</accession>
<comment type="similarity">
    <text evidence="1">Belongs to the herpesviridae UL24 family.</text>
</comment>
<comment type="sequence caution" evidence="1">
    <conflict type="erroneous initiation">
        <sequence resource="EMBL-CDS" id="AAA46171"/>
    </conflict>
</comment>
<organism>
    <name type="scientific">Feline herpesvirus 1</name>
    <name type="common">FeHV-1</name>
    <name type="synonym">Feline viral rhinotracheitis virus</name>
    <dbReference type="NCBI Taxonomy" id="10334"/>
    <lineage>
        <taxon>Viruses</taxon>
        <taxon>Duplodnaviria</taxon>
        <taxon>Heunggongvirae</taxon>
        <taxon>Peploviricota</taxon>
        <taxon>Herviviricetes</taxon>
        <taxon>Herpesvirales</taxon>
        <taxon>Orthoherpesviridae</taxon>
        <taxon>Alphaherpesvirinae</taxon>
        <taxon>Varicellovirus</taxon>
        <taxon>Varicellovirus felidalpha1</taxon>
    </lineage>
</organism>
<proteinExistence type="inferred from homology"/>
<evidence type="ECO:0000305" key="1"/>
<gene>
    <name type="primary">UL24</name>
</gene>
<protein>
    <recommendedName>
        <fullName>Protein UL24 homolog</fullName>
    </recommendedName>
</protein>